<organism>
    <name type="scientific">Naja kaouthia</name>
    <name type="common">Monocled cobra</name>
    <name type="synonym">Naja siamensis</name>
    <dbReference type="NCBI Taxonomy" id="8649"/>
    <lineage>
        <taxon>Eukaryota</taxon>
        <taxon>Metazoa</taxon>
        <taxon>Chordata</taxon>
        <taxon>Craniata</taxon>
        <taxon>Vertebrata</taxon>
        <taxon>Euteleostomi</taxon>
        <taxon>Lepidosauria</taxon>
        <taxon>Squamata</taxon>
        <taxon>Bifurcata</taxon>
        <taxon>Unidentata</taxon>
        <taxon>Episquamata</taxon>
        <taxon>Toxicofera</taxon>
        <taxon>Serpentes</taxon>
        <taxon>Colubroidea</taxon>
        <taxon>Elapidae</taxon>
        <taxon>Elapinae</taxon>
        <taxon>Naja</taxon>
    </lineage>
</organism>
<name>CRVP2_NAJKA</name>
<sequence>MIAFIVLLSLAAVLQQSSGTVDFASESSNKRENQKQIVDKHNALRRSVRPTARNMLQMEWNSNAAQNAKRWADRCSFAHSPPHLRTVGKIGCGENLFMSSQPYAWSRVIQSWYDENKKFVYGVGANPPGSVIGHYTQIVWYNSHLLGCGAAKCSSSKYLYVCQYCPAGNIIGSIATPYKSGPPCGDCPSACVNGLCTNPCKHHNVFSNCQSLAKQNACQTEWMKSKCAASCFCRTEII</sequence>
<accession>P84808</accession>
<accession>B5THG9</accession>
<evidence type="ECO:0000250" key="1"/>
<evidence type="ECO:0000255" key="2"/>
<evidence type="ECO:0000255" key="3">
    <source>
        <dbReference type="PROSITE-ProRule" id="PRU01005"/>
    </source>
</evidence>
<evidence type="ECO:0000269" key="4">
    <source>
    </source>
</evidence>
<evidence type="ECO:0000269" key="5">
    <source>
    </source>
</evidence>
<evidence type="ECO:0000305" key="6"/>
<keyword id="KW-0903">Direct protein sequencing</keyword>
<keyword id="KW-1015">Disulfide bond</keyword>
<keyword id="KW-0964">Secreted</keyword>
<keyword id="KW-0732">Signal</keyword>
<keyword id="KW-0800">Toxin</keyword>
<reference key="1">
    <citation type="journal article" date="2009" name="J. Biochem.">
        <title>Structural divergence of cysteine-rich secretory proteins in snake venoms.</title>
        <authorList>
            <person name="Matsunaga Y."/>
            <person name="Yamazaki Y."/>
            <person name="Hyodo F."/>
            <person name="Sugiyama Y."/>
            <person name="Nozaki M."/>
            <person name="Morita T."/>
        </authorList>
    </citation>
    <scope>NUCLEOTIDE SEQUENCE [MRNA]</scope>
    <scope>PROTEIN SEQUENCE OF 26-90 AND 202-226</scope>
    <source>
        <tissue>Venom</tissue>
        <tissue>Venom gland</tissue>
    </source>
</reference>
<reference evidence="6" key="2">
    <citation type="journal article" date="2005" name="Biochem. Biophys. Res. Commun.">
        <title>Cobra venom contains a pool of cysteine-rich secretory proteins.</title>
        <authorList>
            <person name="Osipov A.V."/>
            <person name="Levashov M.Y."/>
            <person name="Tsetlin V.I."/>
            <person name="Utkin Y.N."/>
        </authorList>
    </citation>
    <scope>PROTEIN SEQUENCE OF 26-38</scope>
    <scope>SUBCELLULAR LOCATION</scope>
    <scope>TISSUE SPECIFICITY</scope>
    <scope>MASS SPECTROMETRY</scope>
    <source>
        <tissue evidence="4">Venom</tissue>
    </source>
</reference>
<comment type="subcellular location">
    <subcellularLocation>
        <location evidence="4">Secreted</location>
    </subcellularLocation>
</comment>
<comment type="tissue specificity">
    <text evidence="4">Expressed by the venom gland.</text>
</comment>
<comment type="mass spectrometry">
    <text>It is not clear why there are two peaks for this protein.</text>
</comment>
<comment type="mass spectrometry"/>
<comment type="similarity">
    <text evidence="2">Belongs to the CRISP family.</text>
</comment>
<feature type="signal peptide" evidence="1">
    <location>
        <begin position="1"/>
        <end position="19"/>
    </location>
</feature>
<feature type="propeptide" id="PRO_0000422143" evidence="4 5">
    <location>
        <begin position="20"/>
        <end position="25"/>
    </location>
</feature>
<feature type="chain" id="PRO_5000399106" description="Cysteine-rich venom protein kaouthin-2">
    <location>
        <begin position="26"/>
        <end position="238"/>
    </location>
</feature>
<feature type="domain" description="SCP">
    <location>
        <begin position="38"/>
        <end position="164"/>
    </location>
</feature>
<feature type="domain" description="ShKT" evidence="3">
    <location>
        <begin position="200"/>
        <end position="233"/>
    </location>
</feature>
<feature type="disulfide bond" evidence="3">
    <location>
        <begin position="75"/>
        <end position="153"/>
    </location>
</feature>
<feature type="disulfide bond" evidence="3">
    <location>
        <begin position="92"/>
        <end position="165"/>
    </location>
</feature>
<feature type="disulfide bond" evidence="3">
    <location>
        <begin position="148"/>
        <end position="162"/>
    </location>
</feature>
<feature type="disulfide bond" evidence="3">
    <location>
        <begin position="184"/>
        <end position="191"/>
    </location>
</feature>
<feature type="disulfide bond" evidence="3">
    <location>
        <begin position="187"/>
        <end position="196"/>
    </location>
</feature>
<feature type="disulfide bond" evidence="3">
    <location>
        <begin position="200"/>
        <end position="233"/>
    </location>
</feature>
<feature type="disulfide bond" evidence="3">
    <location>
        <begin position="209"/>
        <end position="227"/>
    </location>
</feature>
<feature type="disulfide bond" evidence="3">
    <location>
        <begin position="218"/>
        <end position="231"/>
    </location>
</feature>
<protein>
    <recommendedName>
        <fullName>Cysteine-rich venom protein kaouthin-2</fullName>
    </recommendedName>
    <alternativeName>
        <fullName>Cysteine-rich venom protein 23</fullName>
        <shortName>CRVP-23k</shortName>
    </alternativeName>
</protein>
<dbReference type="EMBL" id="EU938340">
    <property type="protein sequence ID" value="ACH73168.1"/>
    <property type="molecule type" value="mRNA"/>
</dbReference>
<dbReference type="SMR" id="P84808"/>
<dbReference type="GO" id="GO:0005576">
    <property type="term" value="C:extracellular region"/>
    <property type="evidence" value="ECO:0000314"/>
    <property type="project" value="UniProtKB"/>
</dbReference>
<dbReference type="GO" id="GO:0090729">
    <property type="term" value="F:toxin activity"/>
    <property type="evidence" value="ECO:0007669"/>
    <property type="project" value="UniProtKB-KW"/>
</dbReference>
<dbReference type="GO" id="GO:0006952">
    <property type="term" value="P:defense response"/>
    <property type="evidence" value="ECO:0000314"/>
    <property type="project" value="UniProtKB"/>
</dbReference>
<dbReference type="CDD" id="cd05383">
    <property type="entry name" value="CAP_CRISP"/>
    <property type="match status" value="1"/>
</dbReference>
<dbReference type="FunFam" id="1.10.10.740:FF:000001">
    <property type="entry name" value="Cysteine-rich secretory protein 2"/>
    <property type="match status" value="1"/>
</dbReference>
<dbReference type="FunFam" id="3.40.33.10:FF:000005">
    <property type="entry name" value="Cysteine-rich secretory protein 2"/>
    <property type="match status" value="1"/>
</dbReference>
<dbReference type="Gene3D" id="3.40.33.10">
    <property type="entry name" value="CAP"/>
    <property type="match status" value="1"/>
</dbReference>
<dbReference type="Gene3D" id="1.10.10.740">
    <property type="entry name" value="Crisp domain"/>
    <property type="match status" value="1"/>
</dbReference>
<dbReference type="InterPro" id="IPR018244">
    <property type="entry name" value="Allrgn_V5/Tpx1_CS"/>
</dbReference>
<dbReference type="InterPro" id="IPR014044">
    <property type="entry name" value="CAP_dom"/>
</dbReference>
<dbReference type="InterPro" id="IPR035940">
    <property type="entry name" value="CAP_sf"/>
</dbReference>
<dbReference type="InterPro" id="IPR042076">
    <property type="entry name" value="Crisp-like_dom"/>
</dbReference>
<dbReference type="InterPro" id="IPR001283">
    <property type="entry name" value="CRISP-related"/>
</dbReference>
<dbReference type="InterPro" id="IPR013871">
    <property type="entry name" value="Cysteine_rich_secretory"/>
</dbReference>
<dbReference type="InterPro" id="IPR034117">
    <property type="entry name" value="SCP_CRISP"/>
</dbReference>
<dbReference type="InterPro" id="IPR003582">
    <property type="entry name" value="ShKT_dom"/>
</dbReference>
<dbReference type="PANTHER" id="PTHR10334">
    <property type="entry name" value="CYSTEINE-RICH SECRETORY PROTEIN-RELATED"/>
    <property type="match status" value="1"/>
</dbReference>
<dbReference type="Pfam" id="PF00188">
    <property type="entry name" value="CAP"/>
    <property type="match status" value="1"/>
</dbReference>
<dbReference type="Pfam" id="PF08562">
    <property type="entry name" value="Crisp"/>
    <property type="match status" value="1"/>
</dbReference>
<dbReference type="PRINTS" id="PR00837">
    <property type="entry name" value="V5TPXLIKE"/>
</dbReference>
<dbReference type="SMART" id="SM00198">
    <property type="entry name" value="SCP"/>
    <property type="match status" value="1"/>
</dbReference>
<dbReference type="SUPFAM" id="SSF57546">
    <property type="entry name" value="Crisp domain-like"/>
    <property type="match status" value="1"/>
</dbReference>
<dbReference type="SUPFAM" id="SSF55797">
    <property type="entry name" value="PR-1-like"/>
    <property type="match status" value="1"/>
</dbReference>
<dbReference type="PROSITE" id="PS01009">
    <property type="entry name" value="CRISP_1"/>
    <property type="match status" value="1"/>
</dbReference>
<dbReference type="PROSITE" id="PS01010">
    <property type="entry name" value="CRISP_2"/>
    <property type="match status" value="1"/>
</dbReference>
<dbReference type="PROSITE" id="PS51670">
    <property type="entry name" value="SHKT"/>
    <property type="match status" value="1"/>
</dbReference>
<proteinExistence type="evidence at protein level"/>